<keyword id="KW-0150">Chloroplast</keyword>
<keyword id="KW-0472">Membrane</keyword>
<keyword id="KW-0520">NAD</keyword>
<keyword id="KW-0521">NADP</keyword>
<keyword id="KW-0934">Plastid</keyword>
<keyword id="KW-0618">Plastoquinone</keyword>
<keyword id="KW-0874">Quinone</keyword>
<keyword id="KW-1185">Reference proteome</keyword>
<keyword id="KW-0793">Thylakoid</keyword>
<keyword id="KW-1278">Translocase</keyword>
<keyword id="KW-0812">Transmembrane</keyword>
<keyword id="KW-1133">Transmembrane helix</keyword>
<keyword id="KW-0813">Transport</keyword>
<comment type="function">
    <text evidence="1">NDH shuttles electrons from NAD(P)H:plastoquinone, via FMN and iron-sulfur (Fe-S) centers, to quinones in the photosynthetic chain and possibly in a chloroplast respiratory chain. The immediate electron acceptor for the enzyme in this species is believed to be plastoquinone. Couples the redox reaction to proton translocation, and thus conserves the redox energy in a proton gradient.</text>
</comment>
<comment type="catalytic activity">
    <reaction evidence="1">
        <text>a plastoquinone + NADH + (n+1) H(+)(in) = a plastoquinol + NAD(+) + n H(+)(out)</text>
        <dbReference type="Rhea" id="RHEA:42608"/>
        <dbReference type="Rhea" id="RHEA-COMP:9561"/>
        <dbReference type="Rhea" id="RHEA-COMP:9562"/>
        <dbReference type="ChEBI" id="CHEBI:15378"/>
        <dbReference type="ChEBI" id="CHEBI:17757"/>
        <dbReference type="ChEBI" id="CHEBI:57540"/>
        <dbReference type="ChEBI" id="CHEBI:57945"/>
        <dbReference type="ChEBI" id="CHEBI:62192"/>
    </reaction>
</comment>
<comment type="catalytic activity">
    <reaction evidence="1">
        <text>a plastoquinone + NADPH + (n+1) H(+)(in) = a plastoquinol + NADP(+) + n H(+)(out)</text>
        <dbReference type="Rhea" id="RHEA:42612"/>
        <dbReference type="Rhea" id="RHEA-COMP:9561"/>
        <dbReference type="Rhea" id="RHEA-COMP:9562"/>
        <dbReference type="ChEBI" id="CHEBI:15378"/>
        <dbReference type="ChEBI" id="CHEBI:17757"/>
        <dbReference type="ChEBI" id="CHEBI:57783"/>
        <dbReference type="ChEBI" id="CHEBI:58349"/>
        <dbReference type="ChEBI" id="CHEBI:62192"/>
    </reaction>
</comment>
<comment type="subunit">
    <text evidence="1">NDH is composed of at least 16 different subunits, 5 of which are encoded in the nucleus.</text>
</comment>
<comment type="subcellular location">
    <subcellularLocation>
        <location evidence="1">Plastid</location>
        <location evidence="1">Chloroplast thylakoid membrane</location>
        <topology evidence="1">Multi-pass membrane protein</topology>
    </subcellularLocation>
</comment>
<comment type="similarity">
    <text evidence="1">Belongs to the complex I subunit 4L family.</text>
</comment>
<comment type="caution">
    <text evidence="2">A stretch of the chloroplast genome is duplicated within chromosomes 6 and 7 resulting in the duplication of the gene. The expression of these duplicated genes has not been demonstrated.</text>
</comment>
<geneLocation type="chloroplast"/>
<protein>
    <recommendedName>
        <fullName evidence="1">NAD(P)H-quinone oxidoreductase subunit 4L, chloroplastic</fullName>
        <ecNumber evidence="1">7.1.1.-</ecNumber>
    </recommendedName>
    <alternativeName>
        <fullName evidence="1">NAD(P)H dehydrogenase subunit 4L</fullName>
    </alternativeName>
    <alternativeName>
        <fullName evidence="1">NADH-plastoquinone oxidoreductase subunit 4L</fullName>
    </alternativeName>
</protein>
<organism>
    <name type="scientific">Oryza sativa subsp. japonica</name>
    <name type="common">Rice</name>
    <dbReference type="NCBI Taxonomy" id="39947"/>
    <lineage>
        <taxon>Eukaryota</taxon>
        <taxon>Viridiplantae</taxon>
        <taxon>Streptophyta</taxon>
        <taxon>Embryophyta</taxon>
        <taxon>Tracheophyta</taxon>
        <taxon>Spermatophyta</taxon>
        <taxon>Magnoliopsida</taxon>
        <taxon>Liliopsida</taxon>
        <taxon>Poales</taxon>
        <taxon>Poaceae</taxon>
        <taxon>BOP clade</taxon>
        <taxon>Oryzoideae</taxon>
        <taxon>Oryzeae</taxon>
        <taxon>Oryzinae</taxon>
        <taxon>Oryza</taxon>
        <taxon>Oryza sativa</taxon>
    </lineage>
</organism>
<sequence>MMFEHVLFLSVYLFSIGIYGLITSRNMVRALICLELILNSINLNLVTFSDLFDSRQLKGDIFAIFVIALAAAEAAIGLSILSSIHRNRKSTRINQSNFLNN</sequence>
<feature type="chain" id="PRO_0000288701" description="NAD(P)H-quinone oxidoreductase subunit 4L, chloroplastic">
    <location>
        <begin position="1"/>
        <end position="101"/>
    </location>
</feature>
<feature type="transmembrane region" description="Helical" evidence="1">
    <location>
        <begin position="2"/>
        <end position="22"/>
    </location>
</feature>
<feature type="transmembrane region" description="Helical" evidence="1">
    <location>
        <begin position="32"/>
        <end position="52"/>
    </location>
</feature>
<feature type="transmembrane region" description="Helical" evidence="1">
    <location>
        <begin position="61"/>
        <end position="81"/>
    </location>
</feature>
<dbReference type="EC" id="7.1.1.-" evidence="1"/>
<dbReference type="EMBL" id="X15901">
    <property type="protein sequence ID" value="CAA33955.1"/>
    <property type="molecule type" value="Genomic_DNA"/>
</dbReference>
<dbReference type="EMBL" id="AY522330">
    <property type="protein sequence ID" value="AAS46159.1"/>
    <property type="molecule type" value="Genomic_DNA"/>
</dbReference>
<dbReference type="EMBL" id="AP003728">
    <property type="protein sequence ID" value="BAD45532.1"/>
    <property type="molecule type" value="Genomic_DNA"/>
</dbReference>
<dbReference type="EMBL" id="AP004989">
    <property type="protein sequence ID" value="BAD45929.1"/>
    <property type="molecule type" value="Genomic_DNA"/>
</dbReference>
<dbReference type="EMBL" id="AP005438">
    <property type="protein sequence ID" value="BAD31377.1"/>
    <property type="molecule type" value="Genomic_DNA"/>
</dbReference>
<dbReference type="PIR" id="JQ0291">
    <property type="entry name" value="DERZNL"/>
</dbReference>
<dbReference type="RefSeq" id="NP_039446.1">
    <property type="nucleotide sequence ID" value="NC_001320.1"/>
</dbReference>
<dbReference type="SMR" id="P0C334"/>
<dbReference type="FunCoup" id="P0C334">
    <property type="interactions" value="42"/>
</dbReference>
<dbReference type="STRING" id="39947.P0C334"/>
<dbReference type="PaxDb" id="39947-P0C334"/>
<dbReference type="EnsemblPlants" id="transcript-ndhE">
    <property type="protein sequence ID" value="cds-CAA33955.1"/>
    <property type="gene ID" value="gene-ndhE"/>
</dbReference>
<dbReference type="GeneID" id="3131399"/>
<dbReference type="Gramene" id="transcript-ndhE">
    <property type="protein sequence ID" value="cds-CAA33955.1"/>
    <property type="gene ID" value="gene-ndhE"/>
</dbReference>
<dbReference type="KEGG" id="dosa:ndhE"/>
<dbReference type="KEGG" id="osa:3131399"/>
<dbReference type="InParanoid" id="P0C334"/>
<dbReference type="OrthoDB" id="688188at2759"/>
<dbReference type="Proteomes" id="UP000000763">
    <property type="component" value="Chromosome 6"/>
</dbReference>
<dbReference type="Proteomes" id="UP000000763">
    <property type="component" value="Chromosome 7"/>
</dbReference>
<dbReference type="Proteomes" id="UP000059680">
    <property type="component" value="Chloroplast"/>
</dbReference>
<dbReference type="GO" id="GO:0009535">
    <property type="term" value="C:chloroplast thylakoid membrane"/>
    <property type="evidence" value="ECO:0007669"/>
    <property type="project" value="UniProtKB-SubCell"/>
</dbReference>
<dbReference type="GO" id="GO:0030964">
    <property type="term" value="C:NADH dehydrogenase complex"/>
    <property type="evidence" value="ECO:0000318"/>
    <property type="project" value="GO_Central"/>
</dbReference>
<dbReference type="GO" id="GO:0009536">
    <property type="term" value="C:plastid"/>
    <property type="evidence" value="ECO:0000305"/>
    <property type="project" value="Gramene"/>
</dbReference>
<dbReference type="GO" id="GO:0016655">
    <property type="term" value="F:oxidoreductase activity, acting on NAD(P)H, quinone or similar compound as acceptor"/>
    <property type="evidence" value="ECO:0007669"/>
    <property type="project" value="UniProtKB-UniRule"/>
</dbReference>
<dbReference type="GO" id="GO:0048038">
    <property type="term" value="F:quinone binding"/>
    <property type="evidence" value="ECO:0007669"/>
    <property type="project" value="UniProtKB-KW"/>
</dbReference>
<dbReference type="GO" id="GO:0042773">
    <property type="term" value="P:ATP synthesis coupled electron transport"/>
    <property type="evidence" value="ECO:0007669"/>
    <property type="project" value="InterPro"/>
</dbReference>
<dbReference type="GO" id="GO:0019684">
    <property type="term" value="P:photosynthesis, light reaction"/>
    <property type="evidence" value="ECO:0007669"/>
    <property type="project" value="UniProtKB-UniRule"/>
</dbReference>
<dbReference type="FunFam" id="1.10.287.3510:FF:000001">
    <property type="entry name" value="NADH-quinone oxidoreductase subunit K"/>
    <property type="match status" value="1"/>
</dbReference>
<dbReference type="Gene3D" id="1.10.287.3510">
    <property type="match status" value="1"/>
</dbReference>
<dbReference type="HAMAP" id="MF_01456">
    <property type="entry name" value="NDH1_NuoK"/>
    <property type="match status" value="1"/>
</dbReference>
<dbReference type="InterPro" id="IPR001133">
    <property type="entry name" value="NADH_UbQ_OxRdtase_chain4L/K"/>
</dbReference>
<dbReference type="InterPro" id="IPR039428">
    <property type="entry name" value="NUOK/Mnh_C1-like"/>
</dbReference>
<dbReference type="NCBIfam" id="NF004320">
    <property type="entry name" value="PRK05715.1-2"/>
    <property type="match status" value="1"/>
</dbReference>
<dbReference type="PANTHER" id="PTHR11434:SF16">
    <property type="entry name" value="NADH-UBIQUINONE OXIDOREDUCTASE CHAIN 4L"/>
    <property type="match status" value="1"/>
</dbReference>
<dbReference type="PANTHER" id="PTHR11434">
    <property type="entry name" value="NADH-UBIQUINONE OXIDOREDUCTASE SUBUNIT ND4L"/>
    <property type="match status" value="1"/>
</dbReference>
<dbReference type="Pfam" id="PF00420">
    <property type="entry name" value="Oxidored_q2"/>
    <property type="match status" value="1"/>
</dbReference>
<accession>P0C334</accession>
<accession>P12128</accession>
<accession>Q6QXX2</accession>
<accession>Q6QY35</accession>
<name>NU4LC_ORYSJ</name>
<evidence type="ECO:0000255" key="1">
    <source>
        <dbReference type="HAMAP-Rule" id="MF_01456"/>
    </source>
</evidence>
<evidence type="ECO:0000305" key="2"/>
<reference key="1">
    <citation type="journal article" date="1989" name="Mol. Gen. Genet.">
        <title>The complete sequence of the rice (Oryza sativa) chloroplast genome: intermolecular recombination between distinct tRNA genes accounts for a major plastid DNA inversion during the evolution of the cereals.</title>
        <authorList>
            <person name="Hiratsuka J."/>
            <person name="Shimada H."/>
            <person name="Whittier R."/>
            <person name="Ishibashi T."/>
            <person name="Sakamoto M."/>
            <person name="Mori M."/>
            <person name="Kondo C."/>
            <person name="Honji Y."/>
            <person name="Sun C.-R."/>
            <person name="Meng B.-Y."/>
            <person name="Li Y.-Q."/>
            <person name="Kanno A."/>
            <person name="Nishizawa Y."/>
            <person name="Hirai A."/>
            <person name="Shinozaki K."/>
            <person name="Sugiura M."/>
        </authorList>
    </citation>
    <scope>NUCLEOTIDE SEQUENCE [LARGE SCALE GENOMIC DNA]</scope>
    <source>
        <strain>cv. Nipponbare</strain>
    </source>
</reference>
<reference key="2">
    <citation type="journal article" date="2004" name="Plant Physiol.">
        <title>A comparison of rice chloroplast genomes.</title>
        <authorList>
            <person name="Tang J."/>
            <person name="Xia H."/>
            <person name="Cao M."/>
            <person name="Zhang X."/>
            <person name="Zeng W."/>
            <person name="Hu S."/>
            <person name="Tong W."/>
            <person name="Wang J."/>
            <person name="Wang J."/>
            <person name="Yu J."/>
            <person name="Yang H."/>
            <person name="Zhu L."/>
        </authorList>
    </citation>
    <scope>NUCLEOTIDE SEQUENCE [LARGE SCALE GENOMIC DNA]</scope>
    <source>
        <strain>cv. Nipponbare</strain>
    </source>
</reference>
<reference key="3">
    <citation type="journal article" date="2005" name="Nature">
        <title>The map-based sequence of the rice genome.</title>
        <authorList>
            <consortium name="International rice genome sequencing project (IRGSP)"/>
        </authorList>
    </citation>
    <scope>NUCLEOTIDE SEQUENCE [LARGE SCALE GENOMIC DNA]</scope>
    <source>
        <strain>cv. Nipponbare</strain>
    </source>
</reference>
<reference key="4">
    <citation type="journal article" date="2008" name="Nucleic Acids Res.">
        <title>The rice annotation project database (RAP-DB): 2008 update.</title>
        <authorList>
            <consortium name="The rice annotation project (RAP)"/>
        </authorList>
    </citation>
    <scope>GENOME REANNOTATION</scope>
    <source>
        <strain>cv. Nipponbare</strain>
    </source>
</reference>
<gene>
    <name evidence="1" type="primary">ndhE</name>
    <name type="ORF">Nip171</name>
</gene>
<proteinExistence type="inferred from homology"/>